<comment type="function">
    <text evidence="1">Catalyzes the reversible phosphorylation of UMP to UDP.</text>
</comment>
<comment type="catalytic activity">
    <reaction evidence="1">
        <text>UMP + ATP = UDP + ADP</text>
        <dbReference type="Rhea" id="RHEA:24400"/>
        <dbReference type="ChEBI" id="CHEBI:30616"/>
        <dbReference type="ChEBI" id="CHEBI:57865"/>
        <dbReference type="ChEBI" id="CHEBI:58223"/>
        <dbReference type="ChEBI" id="CHEBI:456216"/>
        <dbReference type="EC" id="2.7.4.22"/>
    </reaction>
</comment>
<comment type="activity regulation">
    <text evidence="1">Allosterically activated by GTP. Inhibited by UTP.</text>
</comment>
<comment type="pathway">
    <text evidence="1">Pyrimidine metabolism; CTP biosynthesis via de novo pathway; UDP from UMP (UMPK route): step 1/1.</text>
</comment>
<comment type="subunit">
    <text evidence="1">Homohexamer.</text>
</comment>
<comment type="subcellular location">
    <subcellularLocation>
        <location evidence="1">Cytoplasm</location>
    </subcellularLocation>
</comment>
<comment type="similarity">
    <text evidence="1">Belongs to the UMP kinase family.</text>
</comment>
<protein>
    <recommendedName>
        <fullName evidence="1">Uridylate kinase</fullName>
        <shortName evidence="1">UK</shortName>
        <ecNumber evidence="1">2.7.4.22</ecNumber>
    </recommendedName>
    <alternativeName>
        <fullName evidence="1">Uridine monophosphate kinase</fullName>
        <shortName evidence="1">UMP kinase</shortName>
        <shortName evidence="1">UMPK</shortName>
    </alternativeName>
</protein>
<sequence length="251" mass="27560">MSTFPKRILLKLSGETLIGNQGFGIQQQACLQITKSIQQIQQLGIQLGIVIGGGNIFRGINLKANGMPRVPADHMGMLATLLNGIALQQALISLEVKTCVMSALDCPKVAESYQWSKALQYLEEGVVVIFVGGTGNPYFTTDTAAALRASEIQANLLLKATKVDGIYNQDPLKNTQAVKYDRISYSQVLAEKLQVMDATAIALCRNHQIPIFVFNMKRLFENRLDHVLTDYSHGTLVDDGEIGHEANKLDR</sequence>
<keyword id="KW-0021">Allosteric enzyme</keyword>
<keyword id="KW-0067">ATP-binding</keyword>
<keyword id="KW-0963">Cytoplasm</keyword>
<keyword id="KW-0418">Kinase</keyword>
<keyword id="KW-0547">Nucleotide-binding</keyword>
<keyword id="KW-0665">Pyrimidine biosynthesis</keyword>
<keyword id="KW-1185">Reference proteome</keyword>
<keyword id="KW-0808">Transferase</keyword>
<dbReference type="EC" id="2.7.4.22" evidence="1"/>
<dbReference type="EMBL" id="BX908798">
    <property type="protein sequence ID" value="CAF24601.1"/>
    <property type="molecule type" value="Genomic_DNA"/>
</dbReference>
<dbReference type="RefSeq" id="WP_011176422.1">
    <property type="nucleotide sequence ID" value="NC_005861.2"/>
</dbReference>
<dbReference type="SMR" id="Q6M9Z8"/>
<dbReference type="STRING" id="264201.pc1877"/>
<dbReference type="KEGG" id="pcu:PC_RS09010"/>
<dbReference type="eggNOG" id="COG0528">
    <property type="taxonomic scope" value="Bacteria"/>
</dbReference>
<dbReference type="HOGENOM" id="CLU_033861_0_0_0"/>
<dbReference type="OrthoDB" id="9807458at2"/>
<dbReference type="UniPathway" id="UPA00159">
    <property type="reaction ID" value="UER00275"/>
</dbReference>
<dbReference type="Proteomes" id="UP000000529">
    <property type="component" value="Chromosome"/>
</dbReference>
<dbReference type="GO" id="GO:0005737">
    <property type="term" value="C:cytoplasm"/>
    <property type="evidence" value="ECO:0007669"/>
    <property type="project" value="UniProtKB-SubCell"/>
</dbReference>
<dbReference type="GO" id="GO:0005524">
    <property type="term" value="F:ATP binding"/>
    <property type="evidence" value="ECO:0007669"/>
    <property type="project" value="UniProtKB-KW"/>
</dbReference>
<dbReference type="GO" id="GO:0033862">
    <property type="term" value="F:UMP kinase activity"/>
    <property type="evidence" value="ECO:0007669"/>
    <property type="project" value="UniProtKB-EC"/>
</dbReference>
<dbReference type="GO" id="GO:0044210">
    <property type="term" value="P:'de novo' CTP biosynthetic process"/>
    <property type="evidence" value="ECO:0007669"/>
    <property type="project" value="UniProtKB-UniRule"/>
</dbReference>
<dbReference type="GO" id="GO:0006225">
    <property type="term" value="P:UDP biosynthetic process"/>
    <property type="evidence" value="ECO:0007669"/>
    <property type="project" value="TreeGrafter"/>
</dbReference>
<dbReference type="CDD" id="cd04254">
    <property type="entry name" value="AAK_UMPK-PyrH-Ec"/>
    <property type="match status" value="1"/>
</dbReference>
<dbReference type="FunFam" id="3.40.1160.10:FF:000001">
    <property type="entry name" value="Uridylate kinase"/>
    <property type="match status" value="1"/>
</dbReference>
<dbReference type="Gene3D" id="3.40.1160.10">
    <property type="entry name" value="Acetylglutamate kinase-like"/>
    <property type="match status" value="1"/>
</dbReference>
<dbReference type="HAMAP" id="MF_01220_B">
    <property type="entry name" value="PyrH_B"/>
    <property type="match status" value="1"/>
</dbReference>
<dbReference type="InterPro" id="IPR036393">
    <property type="entry name" value="AceGlu_kinase-like_sf"/>
</dbReference>
<dbReference type="InterPro" id="IPR001048">
    <property type="entry name" value="Asp/Glu/Uridylate_kinase"/>
</dbReference>
<dbReference type="InterPro" id="IPR011817">
    <property type="entry name" value="Uridylate_kinase"/>
</dbReference>
<dbReference type="InterPro" id="IPR015963">
    <property type="entry name" value="Uridylate_kinase_bac"/>
</dbReference>
<dbReference type="NCBIfam" id="TIGR02075">
    <property type="entry name" value="pyrH_bact"/>
    <property type="match status" value="1"/>
</dbReference>
<dbReference type="PANTHER" id="PTHR42833">
    <property type="entry name" value="URIDYLATE KINASE"/>
    <property type="match status" value="1"/>
</dbReference>
<dbReference type="PANTHER" id="PTHR42833:SF4">
    <property type="entry name" value="URIDYLATE KINASE PUMPKIN, CHLOROPLASTIC"/>
    <property type="match status" value="1"/>
</dbReference>
<dbReference type="Pfam" id="PF00696">
    <property type="entry name" value="AA_kinase"/>
    <property type="match status" value="1"/>
</dbReference>
<dbReference type="PIRSF" id="PIRSF005650">
    <property type="entry name" value="Uridylate_kin"/>
    <property type="match status" value="1"/>
</dbReference>
<dbReference type="SUPFAM" id="SSF53633">
    <property type="entry name" value="Carbamate kinase-like"/>
    <property type="match status" value="1"/>
</dbReference>
<reference key="1">
    <citation type="journal article" date="2004" name="Science">
        <title>Illuminating the evolutionary history of chlamydiae.</title>
        <authorList>
            <person name="Horn M."/>
            <person name="Collingro A."/>
            <person name="Schmitz-Esser S."/>
            <person name="Beier C.L."/>
            <person name="Purkhold U."/>
            <person name="Fartmann B."/>
            <person name="Brandt P."/>
            <person name="Nyakatura G.J."/>
            <person name="Droege M."/>
            <person name="Frishman D."/>
            <person name="Rattei T."/>
            <person name="Mewes H.-W."/>
            <person name="Wagner M."/>
        </authorList>
    </citation>
    <scope>NUCLEOTIDE SEQUENCE [LARGE SCALE GENOMIC DNA]</scope>
    <source>
        <strain>UWE25</strain>
    </source>
</reference>
<accession>Q6M9Z8</accession>
<evidence type="ECO:0000255" key="1">
    <source>
        <dbReference type="HAMAP-Rule" id="MF_01220"/>
    </source>
</evidence>
<gene>
    <name evidence="1" type="primary">pyrH</name>
    <name type="synonym">smbA</name>
    <name type="ordered locus">pc1877</name>
</gene>
<proteinExistence type="inferred from homology"/>
<name>PYRH_PARUW</name>
<organism>
    <name type="scientific">Protochlamydia amoebophila (strain UWE25)</name>
    <dbReference type="NCBI Taxonomy" id="264201"/>
    <lineage>
        <taxon>Bacteria</taxon>
        <taxon>Pseudomonadati</taxon>
        <taxon>Chlamydiota</taxon>
        <taxon>Chlamydiia</taxon>
        <taxon>Parachlamydiales</taxon>
        <taxon>Parachlamydiaceae</taxon>
        <taxon>Candidatus Protochlamydia</taxon>
    </lineage>
</organism>
<feature type="chain" id="PRO_0000323928" description="Uridylate kinase">
    <location>
        <begin position="1"/>
        <end position="251"/>
    </location>
</feature>
<feature type="region of interest" description="Involved in allosteric activation by GTP" evidence="1">
    <location>
        <begin position="19"/>
        <end position="24"/>
    </location>
</feature>
<feature type="binding site" evidence="1">
    <location>
        <begin position="11"/>
        <end position="14"/>
    </location>
    <ligand>
        <name>ATP</name>
        <dbReference type="ChEBI" id="CHEBI:30616"/>
    </ligand>
</feature>
<feature type="binding site" evidence="1">
    <location>
        <position position="53"/>
    </location>
    <ligand>
        <name>UMP</name>
        <dbReference type="ChEBI" id="CHEBI:57865"/>
    </ligand>
</feature>
<feature type="binding site" evidence="1">
    <location>
        <position position="54"/>
    </location>
    <ligand>
        <name>ATP</name>
        <dbReference type="ChEBI" id="CHEBI:30616"/>
    </ligand>
</feature>
<feature type="binding site" evidence="1">
    <location>
        <position position="58"/>
    </location>
    <ligand>
        <name>ATP</name>
        <dbReference type="ChEBI" id="CHEBI:30616"/>
    </ligand>
</feature>
<feature type="binding site" evidence="1">
    <location>
        <position position="73"/>
    </location>
    <ligand>
        <name>UMP</name>
        <dbReference type="ChEBI" id="CHEBI:57865"/>
    </ligand>
</feature>
<feature type="binding site" evidence="1">
    <location>
        <begin position="134"/>
        <end position="141"/>
    </location>
    <ligand>
        <name>UMP</name>
        <dbReference type="ChEBI" id="CHEBI:57865"/>
    </ligand>
</feature>
<feature type="binding site" evidence="1">
    <location>
        <position position="161"/>
    </location>
    <ligand>
        <name>ATP</name>
        <dbReference type="ChEBI" id="CHEBI:30616"/>
    </ligand>
</feature>
<feature type="binding site" evidence="1">
    <location>
        <position position="167"/>
    </location>
    <ligand>
        <name>ATP</name>
        <dbReference type="ChEBI" id="CHEBI:30616"/>
    </ligand>
</feature>
<feature type="binding site" evidence="1">
    <location>
        <position position="170"/>
    </location>
    <ligand>
        <name>ATP</name>
        <dbReference type="ChEBI" id="CHEBI:30616"/>
    </ligand>
</feature>